<feature type="chain" id="PRO_0000125364" description="Kinesin-like protein bimC">
    <location>
        <begin position="1"/>
        <end position="1184"/>
    </location>
</feature>
<feature type="domain" description="Kinesin motor" evidence="3">
    <location>
        <begin position="81"/>
        <end position="416"/>
    </location>
</feature>
<feature type="region of interest" description="Disordered" evidence="4">
    <location>
        <begin position="1"/>
        <end position="64"/>
    </location>
</feature>
<feature type="region of interest" description="Globular" evidence="2">
    <location>
        <begin position="901"/>
        <end position="1184"/>
    </location>
</feature>
<feature type="region of interest" description="Disordered" evidence="4">
    <location>
        <begin position="1041"/>
        <end position="1065"/>
    </location>
</feature>
<feature type="region of interest" description="Disordered" evidence="4">
    <location>
        <begin position="1104"/>
        <end position="1184"/>
    </location>
</feature>
<feature type="coiled-coil region" evidence="2">
    <location>
        <begin position="489"/>
        <end position="900"/>
    </location>
</feature>
<feature type="compositionally biased region" description="Polar residues" evidence="4">
    <location>
        <begin position="1"/>
        <end position="11"/>
    </location>
</feature>
<feature type="compositionally biased region" description="Low complexity" evidence="4">
    <location>
        <begin position="12"/>
        <end position="24"/>
    </location>
</feature>
<feature type="compositionally biased region" description="Polar residues" evidence="4">
    <location>
        <begin position="32"/>
        <end position="51"/>
    </location>
</feature>
<feature type="compositionally biased region" description="Low complexity" evidence="4">
    <location>
        <begin position="1049"/>
        <end position="1060"/>
    </location>
</feature>
<feature type="binding site" evidence="3">
    <location>
        <begin position="167"/>
        <end position="174"/>
    </location>
    <ligand>
        <name>ATP</name>
        <dbReference type="ChEBI" id="CHEBI:30616"/>
    </ligand>
</feature>
<feature type="modified residue" description="Phosphothreonine; by CDC2" evidence="1">
    <location>
        <position position="1006"/>
    </location>
</feature>
<feature type="sequence conflict" description="In Ref. 1; AAA33298." evidence="5" ref="1">
    <original>S</original>
    <variation>Y</variation>
    <location>
        <position position="9"/>
    </location>
</feature>
<feature type="sequence conflict" description="In Ref. 1; AAA33298." evidence="5" ref="1">
    <original>P</original>
    <variation>G</variation>
    <location>
        <position position="12"/>
    </location>
</feature>
<feature type="sequence conflict" description="In Ref. 1; AAA33298." evidence="5" ref="1">
    <original>I</original>
    <variation>M</variation>
    <location>
        <position position="393"/>
    </location>
</feature>
<name>BIMC_EMENI</name>
<evidence type="ECO:0000250" key="1"/>
<evidence type="ECO:0000255" key="2"/>
<evidence type="ECO:0000255" key="3">
    <source>
        <dbReference type="PROSITE-ProRule" id="PRU00283"/>
    </source>
</evidence>
<evidence type="ECO:0000256" key="4">
    <source>
        <dbReference type="SAM" id="MobiDB-lite"/>
    </source>
</evidence>
<evidence type="ECO:0000305" key="5"/>
<protein>
    <recommendedName>
        <fullName>Kinesin-like protein bimC</fullName>
    </recommendedName>
</protein>
<reference key="1">
    <citation type="journal article" date="1990" name="Cell">
        <title>Mutation of a gene that encodes a kinesin-like protein blocks nuclear division in A. nidulans.</title>
        <authorList>
            <person name="Enos A.P."/>
            <person name="Morris N.R."/>
        </authorList>
    </citation>
    <scope>NUCLEOTIDE SEQUENCE [MRNA]</scope>
</reference>
<reference key="2">
    <citation type="journal article" date="2005" name="Nature">
        <title>Sequencing of Aspergillus nidulans and comparative analysis with A. fumigatus and A. oryzae.</title>
        <authorList>
            <person name="Galagan J.E."/>
            <person name="Calvo S.E."/>
            <person name="Cuomo C."/>
            <person name="Ma L.-J."/>
            <person name="Wortman J.R."/>
            <person name="Batzoglou S."/>
            <person name="Lee S.-I."/>
            <person name="Bastuerkmen M."/>
            <person name="Spevak C.C."/>
            <person name="Clutterbuck J."/>
            <person name="Kapitonov V."/>
            <person name="Jurka J."/>
            <person name="Scazzocchio C."/>
            <person name="Farman M.L."/>
            <person name="Butler J."/>
            <person name="Purcell S."/>
            <person name="Harris S."/>
            <person name="Braus G.H."/>
            <person name="Draht O."/>
            <person name="Busch S."/>
            <person name="D'Enfert C."/>
            <person name="Bouchier C."/>
            <person name="Goldman G.H."/>
            <person name="Bell-Pedersen D."/>
            <person name="Griffiths-Jones S."/>
            <person name="Doonan J.H."/>
            <person name="Yu J."/>
            <person name="Vienken K."/>
            <person name="Pain A."/>
            <person name="Freitag M."/>
            <person name="Selker E.U."/>
            <person name="Archer D.B."/>
            <person name="Penalva M.A."/>
            <person name="Oakley B.R."/>
            <person name="Momany M."/>
            <person name="Tanaka T."/>
            <person name="Kumagai T."/>
            <person name="Asai K."/>
            <person name="Machida M."/>
            <person name="Nierman W.C."/>
            <person name="Denning D.W."/>
            <person name="Caddick M.X."/>
            <person name="Hynes M."/>
            <person name="Paoletti M."/>
            <person name="Fischer R."/>
            <person name="Miller B.L."/>
            <person name="Dyer P.S."/>
            <person name="Sachs M.S."/>
            <person name="Osmani S.A."/>
            <person name="Birren B.W."/>
        </authorList>
    </citation>
    <scope>NUCLEOTIDE SEQUENCE [LARGE SCALE GENOMIC DNA]</scope>
    <source>
        <strain>FGSC A4 / ATCC 38163 / CBS 112.46 / NRRL 194 / M139</strain>
    </source>
</reference>
<reference key="3">
    <citation type="journal article" date="2009" name="Fungal Genet. Biol.">
        <title>The 2008 update of the Aspergillus nidulans genome annotation: a community effort.</title>
        <authorList>
            <person name="Wortman J.R."/>
            <person name="Gilsenan J.M."/>
            <person name="Joardar V."/>
            <person name="Deegan J."/>
            <person name="Clutterbuck J."/>
            <person name="Andersen M.R."/>
            <person name="Archer D."/>
            <person name="Bencina M."/>
            <person name="Braus G."/>
            <person name="Coutinho P."/>
            <person name="von Dohren H."/>
            <person name="Doonan J."/>
            <person name="Driessen A.J."/>
            <person name="Durek P."/>
            <person name="Espeso E."/>
            <person name="Fekete E."/>
            <person name="Flipphi M."/>
            <person name="Estrada C.G."/>
            <person name="Geysens S."/>
            <person name="Goldman G."/>
            <person name="de Groot P.W."/>
            <person name="Hansen K."/>
            <person name="Harris S.D."/>
            <person name="Heinekamp T."/>
            <person name="Helmstaedt K."/>
            <person name="Henrissat B."/>
            <person name="Hofmann G."/>
            <person name="Homan T."/>
            <person name="Horio T."/>
            <person name="Horiuchi H."/>
            <person name="James S."/>
            <person name="Jones M."/>
            <person name="Karaffa L."/>
            <person name="Karanyi Z."/>
            <person name="Kato M."/>
            <person name="Keller N."/>
            <person name="Kelly D.E."/>
            <person name="Kiel J.A."/>
            <person name="Kim J.M."/>
            <person name="van der Klei I.J."/>
            <person name="Klis F.M."/>
            <person name="Kovalchuk A."/>
            <person name="Krasevec N."/>
            <person name="Kubicek C.P."/>
            <person name="Liu B."/>
            <person name="Maccabe A."/>
            <person name="Meyer V."/>
            <person name="Mirabito P."/>
            <person name="Miskei M."/>
            <person name="Mos M."/>
            <person name="Mullins J."/>
            <person name="Nelson D.R."/>
            <person name="Nielsen J."/>
            <person name="Oakley B.R."/>
            <person name="Osmani S.A."/>
            <person name="Pakula T."/>
            <person name="Paszewski A."/>
            <person name="Paulsen I."/>
            <person name="Pilsyk S."/>
            <person name="Pocsi I."/>
            <person name="Punt P.J."/>
            <person name="Ram A.F."/>
            <person name="Ren Q."/>
            <person name="Robellet X."/>
            <person name="Robson G."/>
            <person name="Seiboth B."/>
            <person name="van Solingen P."/>
            <person name="Specht T."/>
            <person name="Sun J."/>
            <person name="Taheri-Talesh N."/>
            <person name="Takeshita N."/>
            <person name="Ussery D."/>
            <person name="vanKuyk P.A."/>
            <person name="Visser H."/>
            <person name="van de Vondervoort P.J."/>
            <person name="de Vries R.P."/>
            <person name="Walton J."/>
            <person name="Xiang X."/>
            <person name="Xiong Y."/>
            <person name="Zeng A.P."/>
            <person name="Brandt B.W."/>
            <person name="Cornell M.J."/>
            <person name="van den Hondel C.A."/>
            <person name="Visser J."/>
            <person name="Oliver S.G."/>
            <person name="Turner G."/>
        </authorList>
    </citation>
    <scope>GENOME REANNOTATION</scope>
    <source>
        <strain>FGSC A4 / ATCC 38163 / CBS 112.46 / NRRL 194 / M139</strain>
    </source>
</reference>
<keyword id="KW-0067">ATP-binding</keyword>
<keyword id="KW-0131">Cell cycle</keyword>
<keyword id="KW-0132">Cell division</keyword>
<keyword id="KW-0175">Coiled coil</keyword>
<keyword id="KW-0963">Cytoplasm</keyword>
<keyword id="KW-0206">Cytoskeleton</keyword>
<keyword id="KW-0493">Microtubule</keyword>
<keyword id="KW-0498">Mitosis</keyword>
<keyword id="KW-0505">Motor protein</keyword>
<keyword id="KW-0547">Nucleotide-binding</keyword>
<keyword id="KW-0597">Phosphoprotein</keyword>
<keyword id="KW-1185">Reference proteome</keyword>
<gene>
    <name type="primary">bimC</name>
    <name type="ORF">AN3363</name>
</gene>
<accession>P17120</accession>
<accession>C8VHR3</accession>
<accession>Q5B7W7</accession>
<comment type="function">
    <text>Important role in mitotic dividing cells. Microtubule motor required for spindle body separation.</text>
</comment>
<comment type="subcellular location">
    <subcellularLocation>
        <location evidence="5">Cytoplasm</location>
        <location evidence="5">Cytoskeleton</location>
    </subcellularLocation>
</comment>
<comment type="similarity">
    <text evidence="3">Belongs to the TRAFAC class myosin-kinesin ATPase superfamily. Kinesin family. BimC subfamily.</text>
</comment>
<proteinExistence type="evidence at transcript level"/>
<organism>
    <name type="scientific">Emericella nidulans (strain FGSC A4 / ATCC 38163 / CBS 112.46 / NRRL 194 / M139)</name>
    <name type="common">Aspergillus nidulans</name>
    <dbReference type="NCBI Taxonomy" id="227321"/>
    <lineage>
        <taxon>Eukaryota</taxon>
        <taxon>Fungi</taxon>
        <taxon>Dikarya</taxon>
        <taxon>Ascomycota</taxon>
        <taxon>Pezizomycotina</taxon>
        <taxon>Eurotiomycetes</taxon>
        <taxon>Eurotiomycetidae</taxon>
        <taxon>Eurotiales</taxon>
        <taxon>Aspergillaceae</taxon>
        <taxon>Aspergillus</taxon>
        <taxon>Aspergillus subgen. Nidulantes</taxon>
    </lineage>
</organism>
<sequence>MAGPQRATSGLPTRRTTTRQPTRRAGSAIPERQTSTASPAVSTKTAAISRTRTLKSPGEPASVLAKRKERDIEREINEDTSIHVVVRCRGRNEREVKENSGVVLQTEGVKGKTVELSMGPNAVSNKTYTFDKVFSAAADQITVYEDVVLPIVTEMLAGYNCTIFAYGQTGTGKTYTMSGDMTDTLGILSDNAGIIPRVLYSLFAKLADTESTVKCSFIELYNEELRDLLSAEENPKLKIYDNEQKKGHMSTLVQGMEETYIDSATAGIKLLQQGSHKRQVAATKCNDLSSRSHTVFTITVNIKRTTESGEEYVCPGKLNLVDLAGSENIGRSGAENKRATEAGLINKSLLTLGRVINALVDKSQHIPYRESKLTRLLQDSLGGRTKTCIIATISPARSNLEETISTLDYAFRAKNIRNKPQINSTMPKMTLLREFTAEIEKLKAELIATRHRNGVYMSVESYEEMKMENESRRIISEEQRAKIESMESSLRHKVQELLTLTSKFNDLKKDNDDTLAALCSTNDVLQQTDIVLQNTRAQLEEEEMLRCAHEETEHQLQDVGKGLISTLGQTVEDINSLQSKLDRKAELDATNAELWRASSTEVSDVTKRIDQRVEAFQTRHAKLLETTSVKVNEFIATEISNIERTRSDLSEYNRSLDAACNNAKAETSSAHEDMNNVLEEIKDLREEVKSKVGEGLNGLSAAAARISEEVIGEFTQLHSQLHTSFNNLGKDLKSIFETMATHLSEQKNEINRLRAELQSSNRQNIETTHKASAHLAQAIEEEHVAAEAEREILMSQIKALVEESRQKQFARLRAKIDGVRTEISASGDMLEQATTQHDRQIDEWVFKSEQFAKDVNASKDEIRTKLQNDWEAFDQRNSTIRKATESVHKETVRIVDVQVDDMGRQMEALDDFVAKARSQNGRYRDAHIATLDTIATGVRDSYSSIEGRVENLTGRMNQFQQEATHHHATLEESIAPLSNDVRKPLTDLSSSFQNRSLEEYVATGVTPKKRKYDYISVLPSTESHEVLKSRLRTTKEMEVLPFNSDDQLSGPSSSPGGSPSKGFVYNDVEDEVGTHAPTVTNVNPSNTGLREVDANVAARPLVYSTGEKSTDQDGSPVVSPDSATEAEGMNGPPSKRRRSNSVVADTKLPNKMLARRMAGMMEGRENVPPPGISNGRRLRGRPSP</sequence>
<dbReference type="EMBL" id="M32075">
    <property type="protein sequence ID" value="AAA33298.1"/>
    <property type="molecule type" value="mRNA"/>
</dbReference>
<dbReference type="EMBL" id="AACD01000055">
    <property type="protein sequence ID" value="EAA63331.1"/>
    <property type="molecule type" value="Genomic_DNA"/>
</dbReference>
<dbReference type="EMBL" id="BN001306">
    <property type="protein sequence ID" value="CBF82860.1"/>
    <property type="molecule type" value="Genomic_DNA"/>
</dbReference>
<dbReference type="PIR" id="A34795">
    <property type="entry name" value="A34795"/>
</dbReference>
<dbReference type="RefSeq" id="XP_660967.1">
    <property type="nucleotide sequence ID" value="XM_655875.1"/>
</dbReference>
<dbReference type="SMR" id="P17120"/>
<dbReference type="FunCoup" id="P17120">
    <property type="interactions" value="992"/>
</dbReference>
<dbReference type="STRING" id="227321.P17120"/>
<dbReference type="EnsemblFungi" id="CBF82860">
    <property type="protein sequence ID" value="CBF82860"/>
    <property type="gene ID" value="ANIA_03363"/>
</dbReference>
<dbReference type="KEGG" id="ani:ANIA_03363"/>
<dbReference type="VEuPathDB" id="FungiDB:AN3363"/>
<dbReference type="eggNOG" id="KOG0243">
    <property type="taxonomic scope" value="Eukaryota"/>
</dbReference>
<dbReference type="HOGENOM" id="CLU_001485_33_2_1"/>
<dbReference type="InParanoid" id="P17120"/>
<dbReference type="OMA" id="DWETFDQ"/>
<dbReference type="OrthoDB" id="3176171at2759"/>
<dbReference type="Proteomes" id="UP000000560">
    <property type="component" value="Chromosome VI"/>
</dbReference>
<dbReference type="GO" id="GO:0005737">
    <property type="term" value="C:cytoplasm"/>
    <property type="evidence" value="ECO:0007669"/>
    <property type="project" value="UniProtKB-KW"/>
</dbReference>
<dbReference type="GO" id="GO:0072686">
    <property type="term" value="C:mitotic spindle"/>
    <property type="evidence" value="ECO:0000318"/>
    <property type="project" value="GO_Central"/>
</dbReference>
<dbReference type="GO" id="GO:0005634">
    <property type="term" value="C:nucleus"/>
    <property type="evidence" value="ECO:0000318"/>
    <property type="project" value="GO_Central"/>
</dbReference>
<dbReference type="GO" id="GO:0005876">
    <property type="term" value="C:spindle microtubule"/>
    <property type="evidence" value="ECO:0000318"/>
    <property type="project" value="GO_Central"/>
</dbReference>
<dbReference type="GO" id="GO:0005524">
    <property type="term" value="F:ATP binding"/>
    <property type="evidence" value="ECO:0007669"/>
    <property type="project" value="UniProtKB-KW"/>
</dbReference>
<dbReference type="GO" id="GO:0008017">
    <property type="term" value="F:microtubule binding"/>
    <property type="evidence" value="ECO:0000314"/>
    <property type="project" value="AspGD"/>
</dbReference>
<dbReference type="GO" id="GO:0003777">
    <property type="term" value="F:microtubule motor activity"/>
    <property type="evidence" value="ECO:0000314"/>
    <property type="project" value="AspGD"/>
</dbReference>
<dbReference type="GO" id="GO:0060090">
    <property type="term" value="F:molecular adaptor activity"/>
    <property type="evidence" value="ECO:0000269"/>
    <property type="project" value="DisProt"/>
</dbReference>
<dbReference type="GO" id="GO:0008574">
    <property type="term" value="F:plus-end-directed microtubule motor activity"/>
    <property type="evidence" value="ECO:0000318"/>
    <property type="project" value="GO_Central"/>
</dbReference>
<dbReference type="GO" id="GO:0051301">
    <property type="term" value="P:cell division"/>
    <property type="evidence" value="ECO:0007669"/>
    <property type="project" value="UniProtKB-KW"/>
</dbReference>
<dbReference type="GO" id="GO:0000073">
    <property type="term" value="P:initial mitotic spindle pole body separation"/>
    <property type="evidence" value="ECO:0000315"/>
    <property type="project" value="AspGD"/>
</dbReference>
<dbReference type="GO" id="GO:0007018">
    <property type="term" value="P:microtubule-based movement"/>
    <property type="evidence" value="ECO:0007669"/>
    <property type="project" value="InterPro"/>
</dbReference>
<dbReference type="GO" id="GO:0090307">
    <property type="term" value="P:mitotic spindle assembly"/>
    <property type="evidence" value="ECO:0000318"/>
    <property type="project" value="GO_Central"/>
</dbReference>
<dbReference type="GO" id="GO:0051228">
    <property type="term" value="P:mitotic spindle disassembly"/>
    <property type="evidence" value="ECO:0000315"/>
    <property type="project" value="AspGD"/>
</dbReference>
<dbReference type="GO" id="GO:0051231">
    <property type="term" value="P:spindle elongation"/>
    <property type="evidence" value="ECO:0000318"/>
    <property type="project" value="GO_Central"/>
</dbReference>
<dbReference type="CDD" id="cd01364">
    <property type="entry name" value="KISc_BimC_Eg5"/>
    <property type="match status" value="1"/>
</dbReference>
<dbReference type="DisProt" id="DP00636"/>
<dbReference type="FunFam" id="3.40.850.10:FF:000051">
    <property type="entry name" value="Kinesin-like protein bimC"/>
    <property type="match status" value="1"/>
</dbReference>
<dbReference type="Gene3D" id="3.40.850.10">
    <property type="entry name" value="Kinesin motor domain"/>
    <property type="match status" value="1"/>
</dbReference>
<dbReference type="InterPro" id="IPR047149">
    <property type="entry name" value="KIF11-like"/>
</dbReference>
<dbReference type="InterPro" id="IPR047241">
    <property type="entry name" value="KIF11-like_kin_motor_dom"/>
</dbReference>
<dbReference type="InterPro" id="IPR025901">
    <property type="entry name" value="Kinesin-assoc_MT-bd_dom"/>
</dbReference>
<dbReference type="InterPro" id="IPR019821">
    <property type="entry name" value="Kinesin_motor_CS"/>
</dbReference>
<dbReference type="InterPro" id="IPR001752">
    <property type="entry name" value="Kinesin_motor_dom"/>
</dbReference>
<dbReference type="InterPro" id="IPR036961">
    <property type="entry name" value="Kinesin_motor_dom_sf"/>
</dbReference>
<dbReference type="InterPro" id="IPR027417">
    <property type="entry name" value="P-loop_NTPase"/>
</dbReference>
<dbReference type="PANTHER" id="PTHR47970:SF12">
    <property type="entry name" value="KINESIN FAMILY MEMBER 11"/>
    <property type="match status" value="1"/>
</dbReference>
<dbReference type="PANTHER" id="PTHR47970">
    <property type="entry name" value="KINESIN-LIKE PROTEIN KIF11"/>
    <property type="match status" value="1"/>
</dbReference>
<dbReference type="Pfam" id="PF00225">
    <property type="entry name" value="Kinesin"/>
    <property type="match status" value="1"/>
</dbReference>
<dbReference type="Pfam" id="PF13931">
    <property type="entry name" value="Microtub_bind"/>
    <property type="match status" value="1"/>
</dbReference>
<dbReference type="PRINTS" id="PR00380">
    <property type="entry name" value="KINESINHEAVY"/>
</dbReference>
<dbReference type="SMART" id="SM00129">
    <property type="entry name" value="KISc"/>
    <property type="match status" value="1"/>
</dbReference>
<dbReference type="SUPFAM" id="SSF58113">
    <property type="entry name" value="Apolipoprotein A-I"/>
    <property type="match status" value="1"/>
</dbReference>
<dbReference type="SUPFAM" id="SSF52540">
    <property type="entry name" value="P-loop containing nucleoside triphosphate hydrolases"/>
    <property type="match status" value="1"/>
</dbReference>
<dbReference type="PROSITE" id="PS00411">
    <property type="entry name" value="KINESIN_MOTOR_1"/>
    <property type="match status" value="1"/>
</dbReference>
<dbReference type="PROSITE" id="PS50067">
    <property type="entry name" value="KINESIN_MOTOR_2"/>
    <property type="match status" value="1"/>
</dbReference>